<feature type="chain" id="PRO_0000068347" description="Protein ArtA">
    <location>
        <begin position="1"/>
        <end position="104"/>
    </location>
</feature>
<dbReference type="EMBL" id="M20787">
    <property type="protein sequence ID" value="AAC63066.1"/>
    <property type="molecule type" value="Genomic_DNA"/>
</dbReference>
<dbReference type="EMBL" id="U01159">
    <property type="protein sequence ID" value="AAC44178.1"/>
    <property type="molecule type" value="Genomic_DNA"/>
</dbReference>
<dbReference type="EMBL" id="AP001918">
    <property type="protein sequence ID" value="BAA97963.1"/>
    <property type="molecule type" value="Genomic_DNA"/>
</dbReference>
<dbReference type="PIR" id="C32238">
    <property type="entry name" value="BVECAA"/>
</dbReference>
<dbReference type="RefSeq" id="NP_061472.1">
    <property type="nucleotide sequence ID" value="NC_002483.1"/>
</dbReference>
<dbReference type="RefSeq" id="WP_000415566.1">
    <property type="nucleotide sequence ID" value="NZ_JACEFS010000047.1"/>
</dbReference>
<dbReference type="RefSeq" id="YP_008997936.1">
    <property type="nucleotide sequence ID" value="NC_023315.1"/>
</dbReference>
<dbReference type="RefSeq" id="YP_009071250.1">
    <property type="nucleotide sequence ID" value="NC_025179.1"/>
</dbReference>
<dbReference type="KEGG" id="ecoc:C3026_24565"/>
<dbReference type="PATRIC" id="fig|83333.107.peg.619"/>
<dbReference type="PRO" id="PR:P18032"/>
<geneLocation type="plasmid">
    <name>F</name>
</geneLocation>
<name>ARTA_ECOLI</name>
<protein>
    <recommendedName>
        <fullName>Protein ArtA</fullName>
    </recommendedName>
</protein>
<gene>
    <name type="primary">artA</name>
    <name type="ordered locus">ECOK12F093</name>
</gene>
<organism>
    <name type="scientific">Escherichia coli (strain K12)</name>
    <dbReference type="NCBI Taxonomy" id="83333"/>
    <lineage>
        <taxon>Bacteria</taxon>
        <taxon>Pseudomonadati</taxon>
        <taxon>Pseudomonadota</taxon>
        <taxon>Gammaproteobacteria</taxon>
        <taxon>Enterobacterales</taxon>
        <taxon>Enterobacteriaceae</taxon>
        <taxon>Escherichia</taxon>
    </lineage>
</organism>
<accession>P18032</accession>
<keyword id="KW-0614">Plasmid</keyword>
<proteinExistence type="predicted"/>
<reference key="1">
    <citation type="journal article" date="1989" name="J. Bacteriol.">
        <title>Nucleotide sequence of traQ and adjacent loci in the Escherichia coli K-12 F-plasmid transfer operon.</title>
        <authorList>
            <person name="Wu J.H."/>
            <person name="Ippen-Ihler K."/>
        </authorList>
    </citation>
    <scope>NUCLEOTIDE SEQUENCE [GENOMIC DNA]</scope>
    <source>
        <strain>K12</strain>
    </source>
</reference>
<reference key="2">
    <citation type="journal article" date="1994" name="Microbiol. Rev.">
        <title>Analysis of the sequence and gene products of the transfer region of the F sex factor.</title>
        <authorList>
            <person name="Frost L.S."/>
            <person name="Ippen-Ihler K."/>
            <person name="Skurray R.A."/>
        </authorList>
    </citation>
    <scope>NUCLEOTIDE SEQUENCE [GENOMIC DNA]</scope>
</reference>
<reference key="3">
    <citation type="submission" date="2000-04" db="EMBL/GenBank/DDBJ databases">
        <title>Complete nucleotide sequence of the F plasmid: its implications for organization and diversification of plasmid genomes.</title>
        <authorList>
            <person name="Shimizu H."/>
            <person name="Saitoh Y."/>
            <person name="Suda Y."/>
            <person name="Uehara K."/>
            <person name="Sampei G."/>
            <person name="Mizobuchi K."/>
        </authorList>
    </citation>
    <scope>NUCLEOTIDE SEQUENCE [LARGE SCALE GENOMIC DNA]</scope>
    <source>
        <strain>K12 / CR63</strain>
    </source>
</reference>
<sequence>MEKRSFKEKLEIIRNIIRESLLGNAAIIALIYAASHSLPVNAFPDYLVISLLSIAAGIVVLWLFSIIYIYFCELFRSHWIAVWFIIWSSVINLIILYGFYDRFI</sequence>